<organism>
    <name type="scientific">Streptococcus pyogenes serotype M18 (strain MGAS8232)</name>
    <dbReference type="NCBI Taxonomy" id="186103"/>
    <lineage>
        <taxon>Bacteria</taxon>
        <taxon>Bacillati</taxon>
        <taxon>Bacillota</taxon>
        <taxon>Bacilli</taxon>
        <taxon>Lactobacillales</taxon>
        <taxon>Streptococcaceae</taxon>
        <taxon>Streptococcus</taxon>
    </lineage>
</organism>
<evidence type="ECO:0000255" key="1"/>
<evidence type="ECO:0000305" key="2"/>
<accession>Q8NYZ3</accession>
<feature type="chain" id="PRO_0000213666" description="Putative sugar uptake protein spyM18_2243">
    <location>
        <begin position="1"/>
        <end position="287"/>
    </location>
</feature>
<feature type="transmembrane region" description="Helical" evidence="1">
    <location>
        <begin position="4"/>
        <end position="26"/>
    </location>
</feature>
<feature type="transmembrane region" description="Helical" evidence="1">
    <location>
        <begin position="33"/>
        <end position="50"/>
    </location>
</feature>
<feature type="transmembrane region" description="Helical" evidence="1">
    <location>
        <begin position="55"/>
        <end position="72"/>
    </location>
</feature>
<feature type="transmembrane region" description="Helical" evidence="1">
    <location>
        <begin position="85"/>
        <end position="107"/>
    </location>
</feature>
<feature type="transmembrane region" description="Helical" evidence="1">
    <location>
        <begin position="117"/>
        <end position="134"/>
    </location>
</feature>
<feature type="transmembrane region" description="Helical" evidence="1">
    <location>
        <begin position="154"/>
        <end position="171"/>
    </location>
</feature>
<feature type="transmembrane region" description="Helical" evidence="1">
    <location>
        <begin position="181"/>
        <end position="200"/>
    </location>
</feature>
<feature type="transmembrane region" description="Helical" evidence="1">
    <location>
        <begin position="207"/>
        <end position="229"/>
    </location>
</feature>
<feature type="transmembrane region" description="Helical" evidence="1">
    <location>
        <begin position="234"/>
        <end position="256"/>
    </location>
</feature>
<feature type="transmembrane region" description="Helical" evidence="1">
    <location>
        <begin position="268"/>
        <end position="285"/>
    </location>
</feature>
<keyword id="KW-1003">Cell membrane</keyword>
<keyword id="KW-0472">Membrane</keyword>
<keyword id="KW-0762">Sugar transport</keyword>
<keyword id="KW-0812">Transmembrane</keyword>
<keyword id="KW-1133">Transmembrane helix</keyword>
<keyword id="KW-0813">Transport</keyword>
<comment type="subcellular location">
    <subcellularLocation>
        <location evidence="2">Cell membrane</location>
        <topology evidence="2">Multi-pass membrane protein</topology>
    </subcellularLocation>
</comment>
<comment type="similarity">
    <text evidence="2">Belongs to the GRP transporter (TC 2.A.7.5) family.</text>
</comment>
<proteinExistence type="inferred from homology"/>
<dbReference type="EMBL" id="AE009949">
    <property type="protein sequence ID" value="AAL98672.1"/>
    <property type="molecule type" value="Genomic_DNA"/>
</dbReference>
<dbReference type="RefSeq" id="WP_002992310.1">
    <property type="nucleotide sequence ID" value="NC_003485.1"/>
</dbReference>
<dbReference type="SMR" id="Q8NYZ3"/>
<dbReference type="KEGG" id="spm:spyM18_2243"/>
<dbReference type="HOGENOM" id="CLU_076024_0_0_9"/>
<dbReference type="GO" id="GO:0005886">
    <property type="term" value="C:plasma membrane"/>
    <property type="evidence" value="ECO:0007669"/>
    <property type="project" value="UniProtKB-SubCell"/>
</dbReference>
<dbReference type="GO" id="GO:0015144">
    <property type="term" value="F:carbohydrate transmembrane transporter activity"/>
    <property type="evidence" value="ECO:0007669"/>
    <property type="project" value="InterPro"/>
</dbReference>
<dbReference type="CDD" id="cd23110">
    <property type="entry name" value="GRP"/>
    <property type="match status" value="1"/>
</dbReference>
<dbReference type="InterPro" id="IPR010651">
    <property type="entry name" value="Sugar_transport"/>
</dbReference>
<dbReference type="NCBIfam" id="TIGR00776">
    <property type="entry name" value="RhaT"/>
    <property type="match status" value="1"/>
</dbReference>
<dbReference type="PANTHER" id="PTHR16119">
    <property type="entry name" value="TRANSMEMBRANE PROTEIN 144"/>
    <property type="match status" value="1"/>
</dbReference>
<dbReference type="PANTHER" id="PTHR16119:SF17">
    <property type="entry name" value="TRANSMEMBRANE PROTEIN 144"/>
    <property type="match status" value="1"/>
</dbReference>
<dbReference type="Pfam" id="PF06800">
    <property type="entry name" value="Sugar_transport"/>
    <property type="match status" value="1"/>
</dbReference>
<dbReference type="SUPFAM" id="SSF103481">
    <property type="entry name" value="Multidrug resistance efflux transporter EmrE"/>
    <property type="match status" value="1"/>
</dbReference>
<name>Y2243_STRP8</name>
<reference key="1">
    <citation type="journal article" date="2002" name="Proc. Natl. Acad. Sci. U.S.A.">
        <title>Genome sequence and comparative microarray analysis of serotype M18 group A Streptococcus strains associated with acute rheumatic fever outbreaks.</title>
        <authorList>
            <person name="Smoot J.C."/>
            <person name="Barbian K.D."/>
            <person name="Van Gompel J.J."/>
            <person name="Smoot L.M."/>
            <person name="Chaussee M.S."/>
            <person name="Sylva G.L."/>
            <person name="Sturdevant D.E."/>
            <person name="Ricklefs S.M."/>
            <person name="Porcella S.F."/>
            <person name="Parkins L.D."/>
            <person name="Beres S.B."/>
            <person name="Campbell D.S."/>
            <person name="Smith T.M."/>
            <person name="Zhang Q."/>
            <person name="Kapur V."/>
            <person name="Daly J.A."/>
            <person name="Veasy L.G."/>
            <person name="Musser J.M."/>
        </authorList>
    </citation>
    <scope>NUCLEOTIDE SEQUENCE [LARGE SCALE GENOMIC DNA]</scope>
    <source>
        <strain>MGAS8232</strain>
    </source>
</reference>
<gene>
    <name type="ordered locus">spyM18_2243</name>
</gene>
<protein>
    <recommendedName>
        <fullName>Putative sugar uptake protein spyM18_2243</fullName>
    </recommendedName>
</protein>
<sequence length="287" mass="31222">MEGIFYALIPMFTWGSIGFVSNKIGGKPSQQTLGMTFGALLFSLAVWLIVRPEMTLQLWLFGILGGFIWSIGQTGQFHAMQYMGVSVANPLSSGSQLVLGSLIGVLVFHEWTRPMQFVVGSLALLLLIVGFYFSSKQDDANAQVNHLHNFSKGFRALTYSTIGYVMYAVLFNNIMKFEVLSVILPMAVGMVLGAITFMSFKISIDQYVIKNSVVGLLWGIGNIFMLLAASKAGLAIAFSFSQLGAIISIVGGILFLGETKTKKEMRWVVTGIICFIVGAILLGVVKS</sequence>